<dbReference type="EMBL" id="CP001098">
    <property type="protein sequence ID" value="ACL68902.1"/>
    <property type="molecule type" value="Genomic_DNA"/>
</dbReference>
<dbReference type="RefSeq" id="WP_012635100.1">
    <property type="nucleotide sequence ID" value="NC_011899.1"/>
</dbReference>
<dbReference type="SMR" id="B8D0T3"/>
<dbReference type="STRING" id="373903.Hore_01410"/>
<dbReference type="KEGG" id="hor:Hore_01410"/>
<dbReference type="eggNOG" id="COG0257">
    <property type="taxonomic scope" value="Bacteria"/>
</dbReference>
<dbReference type="HOGENOM" id="CLU_135723_6_2_9"/>
<dbReference type="OrthoDB" id="9802520at2"/>
<dbReference type="Proteomes" id="UP000000719">
    <property type="component" value="Chromosome"/>
</dbReference>
<dbReference type="GO" id="GO:0005737">
    <property type="term" value="C:cytoplasm"/>
    <property type="evidence" value="ECO:0007669"/>
    <property type="project" value="UniProtKB-ARBA"/>
</dbReference>
<dbReference type="GO" id="GO:1990904">
    <property type="term" value="C:ribonucleoprotein complex"/>
    <property type="evidence" value="ECO:0007669"/>
    <property type="project" value="UniProtKB-KW"/>
</dbReference>
<dbReference type="GO" id="GO:0005840">
    <property type="term" value="C:ribosome"/>
    <property type="evidence" value="ECO:0007669"/>
    <property type="project" value="UniProtKB-KW"/>
</dbReference>
<dbReference type="GO" id="GO:0003735">
    <property type="term" value="F:structural constituent of ribosome"/>
    <property type="evidence" value="ECO:0007669"/>
    <property type="project" value="InterPro"/>
</dbReference>
<dbReference type="GO" id="GO:0006412">
    <property type="term" value="P:translation"/>
    <property type="evidence" value="ECO:0007669"/>
    <property type="project" value="UniProtKB-UniRule"/>
</dbReference>
<dbReference type="HAMAP" id="MF_00251">
    <property type="entry name" value="Ribosomal_bL36"/>
    <property type="match status" value="1"/>
</dbReference>
<dbReference type="InterPro" id="IPR000473">
    <property type="entry name" value="Ribosomal_bL36"/>
</dbReference>
<dbReference type="InterPro" id="IPR035977">
    <property type="entry name" value="Ribosomal_bL36_sp"/>
</dbReference>
<dbReference type="NCBIfam" id="TIGR01022">
    <property type="entry name" value="rpmJ_bact"/>
    <property type="match status" value="1"/>
</dbReference>
<dbReference type="PANTHER" id="PTHR42888">
    <property type="entry name" value="50S RIBOSOMAL PROTEIN L36, CHLOROPLASTIC"/>
    <property type="match status" value="1"/>
</dbReference>
<dbReference type="PANTHER" id="PTHR42888:SF1">
    <property type="entry name" value="LARGE RIBOSOMAL SUBUNIT PROTEIN BL36C"/>
    <property type="match status" value="1"/>
</dbReference>
<dbReference type="Pfam" id="PF00444">
    <property type="entry name" value="Ribosomal_L36"/>
    <property type="match status" value="1"/>
</dbReference>
<dbReference type="SUPFAM" id="SSF57840">
    <property type="entry name" value="Ribosomal protein L36"/>
    <property type="match status" value="1"/>
</dbReference>
<dbReference type="PROSITE" id="PS00828">
    <property type="entry name" value="RIBOSOMAL_L36"/>
    <property type="match status" value="1"/>
</dbReference>
<evidence type="ECO:0000255" key="1">
    <source>
        <dbReference type="HAMAP-Rule" id="MF_00251"/>
    </source>
</evidence>
<evidence type="ECO:0000305" key="2"/>
<feature type="chain" id="PRO_1000196191" description="Large ribosomal subunit protein bL36">
    <location>
        <begin position="1"/>
        <end position="37"/>
    </location>
</feature>
<sequence length="37" mass="4344">MKVRPSVKPICDKCKVIRRKGKVRVICENPKHKQRQG</sequence>
<reference key="1">
    <citation type="journal article" date="2009" name="PLoS ONE">
        <title>Genome analysis of the anaerobic thermohalophilic bacterium Halothermothrix orenii.</title>
        <authorList>
            <person name="Mavromatis K."/>
            <person name="Ivanova N."/>
            <person name="Anderson I."/>
            <person name="Lykidis A."/>
            <person name="Hooper S.D."/>
            <person name="Sun H."/>
            <person name="Kunin V."/>
            <person name="Lapidus A."/>
            <person name="Hugenholtz P."/>
            <person name="Patel B."/>
            <person name="Kyrpides N.C."/>
        </authorList>
    </citation>
    <scope>NUCLEOTIDE SEQUENCE [LARGE SCALE GENOMIC DNA]</scope>
    <source>
        <strain>H 168 / OCM 544 / DSM 9562</strain>
    </source>
</reference>
<proteinExistence type="inferred from homology"/>
<keyword id="KW-1185">Reference proteome</keyword>
<keyword id="KW-0687">Ribonucleoprotein</keyword>
<keyword id="KW-0689">Ribosomal protein</keyword>
<comment type="similarity">
    <text evidence="1">Belongs to the bacterial ribosomal protein bL36 family.</text>
</comment>
<organism>
    <name type="scientific">Halothermothrix orenii (strain H 168 / OCM 544 / DSM 9562)</name>
    <dbReference type="NCBI Taxonomy" id="373903"/>
    <lineage>
        <taxon>Bacteria</taxon>
        <taxon>Bacillati</taxon>
        <taxon>Bacillota</taxon>
        <taxon>Clostridia</taxon>
        <taxon>Halanaerobiales</taxon>
        <taxon>Halothermotrichaceae</taxon>
        <taxon>Halothermothrix</taxon>
    </lineage>
</organism>
<name>RL36_HALOH</name>
<protein>
    <recommendedName>
        <fullName evidence="1">Large ribosomal subunit protein bL36</fullName>
    </recommendedName>
    <alternativeName>
        <fullName evidence="2">50S ribosomal protein L36</fullName>
    </alternativeName>
</protein>
<gene>
    <name evidence="1" type="primary">rpmJ</name>
    <name type="ordered locus">Hore_01410</name>
</gene>
<accession>B8D0T3</accession>